<organism>
    <name type="scientific">Rhodospirillum rubrum (strain ATCC 11170 / ATH 1.1.1 / DSM 467 / LMG 4362 / NCIMB 8255 / S1)</name>
    <dbReference type="NCBI Taxonomy" id="269796"/>
    <lineage>
        <taxon>Bacteria</taxon>
        <taxon>Pseudomonadati</taxon>
        <taxon>Pseudomonadota</taxon>
        <taxon>Alphaproteobacteria</taxon>
        <taxon>Rhodospirillales</taxon>
        <taxon>Rhodospirillaceae</taxon>
        <taxon>Rhodospirillum</taxon>
    </lineage>
</organism>
<sequence>MNDAARLTTDDIPGLMIDIGRRARAAGRILALAPAAARNAALLAGAAALRAEAGAIALENAKDMSAGRAKGLTDALLDRLELTPARIEAMAKGLEDIAALPDPVGTVLAGWQRPNGLRIERVRVPIGVIGVIYESRPNVTADAGALCLKAGNAAILRGGSESFNSSRAIHRCLAAGLRAAGLPEDAIQSVPTPDRAAVGMLLTMTDFIDVIVPRGGKSLIERVSAESKVPLFKHLEGLCHTYIHAKADPQKALSVTVNAKMRRTGVCGSTETILVDRAIAATILPPLLDALAKAGCALRGDEETRAFSERVGPATAEDWDTEYLDAIVSIRVVADLDEALAHIAAHSSDHTDCILTEDAAAAERFLTEVDSAIVMHNASTQFADGGEFGMGAEIGISTGRLHARGPVGVEQLTIFKYKVRGTGQTRP</sequence>
<dbReference type="EC" id="1.2.1.41" evidence="1"/>
<dbReference type="EMBL" id="CP000230">
    <property type="protein sequence ID" value="ABC22039.1"/>
    <property type="molecule type" value="Genomic_DNA"/>
</dbReference>
<dbReference type="RefSeq" id="WP_011388993.1">
    <property type="nucleotide sequence ID" value="NC_007643.1"/>
</dbReference>
<dbReference type="RefSeq" id="YP_426326.1">
    <property type="nucleotide sequence ID" value="NC_007643.1"/>
</dbReference>
<dbReference type="SMR" id="Q2RV06"/>
<dbReference type="STRING" id="269796.Rru_A1238"/>
<dbReference type="EnsemblBacteria" id="ABC22039">
    <property type="protein sequence ID" value="ABC22039"/>
    <property type="gene ID" value="Rru_A1238"/>
</dbReference>
<dbReference type="KEGG" id="rru:Rru_A1238"/>
<dbReference type="PATRIC" id="fig|269796.9.peg.1303"/>
<dbReference type="eggNOG" id="COG0014">
    <property type="taxonomic scope" value="Bacteria"/>
</dbReference>
<dbReference type="HOGENOM" id="CLU_030231_0_0_5"/>
<dbReference type="PhylomeDB" id="Q2RV06"/>
<dbReference type="UniPathway" id="UPA00098">
    <property type="reaction ID" value="UER00360"/>
</dbReference>
<dbReference type="Proteomes" id="UP000001929">
    <property type="component" value="Chromosome"/>
</dbReference>
<dbReference type="GO" id="GO:0005737">
    <property type="term" value="C:cytoplasm"/>
    <property type="evidence" value="ECO:0007669"/>
    <property type="project" value="UniProtKB-SubCell"/>
</dbReference>
<dbReference type="GO" id="GO:0004350">
    <property type="term" value="F:glutamate-5-semialdehyde dehydrogenase activity"/>
    <property type="evidence" value="ECO:0007669"/>
    <property type="project" value="UniProtKB-UniRule"/>
</dbReference>
<dbReference type="GO" id="GO:0050661">
    <property type="term" value="F:NADP binding"/>
    <property type="evidence" value="ECO:0007669"/>
    <property type="project" value="InterPro"/>
</dbReference>
<dbReference type="GO" id="GO:0055129">
    <property type="term" value="P:L-proline biosynthetic process"/>
    <property type="evidence" value="ECO:0007669"/>
    <property type="project" value="UniProtKB-UniRule"/>
</dbReference>
<dbReference type="CDD" id="cd07079">
    <property type="entry name" value="ALDH_F18-19_ProA-GPR"/>
    <property type="match status" value="1"/>
</dbReference>
<dbReference type="FunFam" id="3.40.309.10:FF:000006">
    <property type="entry name" value="Gamma-glutamyl phosphate reductase"/>
    <property type="match status" value="1"/>
</dbReference>
<dbReference type="Gene3D" id="3.40.605.10">
    <property type="entry name" value="Aldehyde Dehydrogenase, Chain A, domain 1"/>
    <property type="match status" value="1"/>
</dbReference>
<dbReference type="Gene3D" id="3.40.309.10">
    <property type="entry name" value="Aldehyde Dehydrogenase, Chain A, domain 2"/>
    <property type="match status" value="1"/>
</dbReference>
<dbReference type="HAMAP" id="MF_00412">
    <property type="entry name" value="ProA"/>
    <property type="match status" value="1"/>
</dbReference>
<dbReference type="InterPro" id="IPR016161">
    <property type="entry name" value="Ald_DH/histidinol_DH"/>
</dbReference>
<dbReference type="InterPro" id="IPR016163">
    <property type="entry name" value="Ald_DH_C"/>
</dbReference>
<dbReference type="InterPro" id="IPR016162">
    <property type="entry name" value="Ald_DH_N"/>
</dbReference>
<dbReference type="InterPro" id="IPR015590">
    <property type="entry name" value="Aldehyde_DH_dom"/>
</dbReference>
<dbReference type="InterPro" id="IPR020593">
    <property type="entry name" value="G-glutamylP_reductase_CS"/>
</dbReference>
<dbReference type="InterPro" id="IPR012134">
    <property type="entry name" value="Glu-5-SA_DH"/>
</dbReference>
<dbReference type="InterPro" id="IPR000965">
    <property type="entry name" value="GPR_dom"/>
</dbReference>
<dbReference type="NCBIfam" id="NF001221">
    <property type="entry name" value="PRK00197.1"/>
    <property type="match status" value="1"/>
</dbReference>
<dbReference type="NCBIfam" id="TIGR00407">
    <property type="entry name" value="proA"/>
    <property type="match status" value="1"/>
</dbReference>
<dbReference type="PANTHER" id="PTHR11063:SF8">
    <property type="entry name" value="DELTA-1-PYRROLINE-5-CARBOXYLATE SYNTHASE"/>
    <property type="match status" value="1"/>
</dbReference>
<dbReference type="PANTHER" id="PTHR11063">
    <property type="entry name" value="GLUTAMATE SEMIALDEHYDE DEHYDROGENASE"/>
    <property type="match status" value="1"/>
</dbReference>
<dbReference type="Pfam" id="PF00171">
    <property type="entry name" value="Aldedh"/>
    <property type="match status" value="1"/>
</dbReference>
<dbReference type="PIRSF" id="PIRSF000151">
    <property type="entry name" value="GPR"/>
    <property type="match status" value="1"/>
</dbReference>
<dbReference type="SUPFAM" id="SSF53720">
    <property type="entry name" value="ALDH-like"/>
    <property type="match status" value="1"/>
</dbReference>
<dbReference type="PROSITE" id="PS01223">
    <property type="entry name" value="PROA"/>
    <property type="match status" value="1"/>
</dbReference>
<reference key="1">
    <citation type="journal article" date="2011" name="Stand. Genomic Sci.">
        <title>Complete genome sequence of Rhodospirillum rubrum type strain (S1).</title>
        <authorList>
            <person name="Munk A.C."/>
            <person name="Copeland A."/>
            <person name="Lucas S."/>
            <person name="Lapidus A."/>
            <person name="Del Rio T.G."/>
            <person name="Barry K."/>
            <person name="Detter J.C."/>
            <person name="Hammon N."/>
            <person name="Israni S."/>
            <person name="Pitluck S."/>
            <person name="Brettin T."/>
            <person name="Bruce D."/>
            <person name="Han C."/>
            <person name="Tapia R."/>
            <person name="Gilna P."/>
            <person name="Schmutz J."/>
            <person name="Larimer F."/>
            <person name="Land M."/>
            <person name="Kyrpides N.C."/>
            <person name="Mavromatis K."/>
            <person name="Richardson P."/>
            <person name="Rohde M."/>
            <person name="Goeker M."/>
            <person name="Klenk H.P."/>
            <person name="Zhang Y."/>
            <person name="Roberts G.P."/>
            <person name="Reslewic S."/>
            <person name="Schwartz D.C."/>
        </authorList>
    </citation>
    <scope>NUCLEOTIDE SEQUENCE [LARGE SCALE GENOMIC DNA]</scope>
    <source>
        <strain>ATCC 11170 / ATH 1.1.1 / DSM 467 / LMG 4362 / NCIMB 8255 / S1</strain>
    </source>
</reference>
<keyword id="KW-0028">Amino-acid biosynthesis</keyword>
<keyword id="KW-0963">Cytoplasm</keyword>
<keyword id="KW-0521">NADP</keyword>
<keyword id="KW-0560">Oxidoreductase</keyword>
<keyword id="KW-0641">Proline biosynthesis</keyword>
<keyword id="KW-1185">Reference proteome</keyword>
<name>PROA_RHORT</name>
<proteinExistence type="inferred from homology"/>
<accession>Q2RV06</accession>
<evidence type="ECO:0000255" key="1">
    <source>
        <dbReference type="HAMAP-Rule" id="MF_00412"/>
    </source>
</evidence>
<protein>
    <recommendedName>
        <fullName evidence="1">Gamma-glutamyl phosphate reductase</fullName>
        <shortName evidence="1">GPR</shortName>
        <ecNumber evidence="1">1.2.1.41</ecNumber>
    </recommendedName>
    <alternativeName>
        <fullName evidence="1">Glutamate-5-semialdehyde dehydrogenase</fullName>
    </alternativeName>
    <alternativeName>
        <fullName evidence="1">Glutamyl-gamma-semialdehyde dehydrogenase</fullName>
        <shortName evidence="1">GSA dehydrogenase</shortName>
    </alternativeName>
</protein>
<comment type="function">
    <text evidence="1">Catalyzes the NADPH-dependent reduction of L-glutamate 5-phosphate into L-glutamate 5-semialdehyde and phosphate. The product spontaneously undergoes cyclization to form 1-pyrroline-5-carboxylate.</text>
</comment>
<comment type="catalytic activity">
    <reaction evidence="1">
        <text>L-glutamate 5-semialdehyde + phosphate + NADP(+) = L-glutamyl 5-phosphate + NADPH + H(+)</text>
        <dbReference type="Rhea" id="RHEA:19541"/>
        <dbReference type="ChEBI" id="CHEBI:15378"/>
        <dbReference type="ChEBI" id="CHEBI:43474"/>
        <dbReference type="ChEBI" id="CHEBI:57783"/>
        <dbReference type="ChEBI" id="CHEBI:58066"/>
        <dbReference type="ChEBI" id="CHEBI:58274"/>
        <dbReference type="ChEBI" id="CHEBI:58349"/>
        <dbReference type="EC" id="1.2.1.41"/>
    </reaction>
</comment>
<comment type="pathway">
    <text evidence="1">Amino-acid biosynthesis; L-proline biosynthesis; L-glutamate 5-semialdehyde from L-glutamate: step 2/2.</text>
</comment>
<comment type="subcellular location">
    <subcellularLocation>
        <location evidence="1">Cytoplasm</location>
    </subcellularLocation>
</comment>
<comment type="similarity">
    <text evidence="1">Belongs to the gamma-glutamyl phosphate reductase family.</text>
</comment>
<feature type="chain" id="PRO_0000230021" description="Gamma-glutamyl phosphate reductase">
    <location>
        <begin position="1"/>
        <end position="427"/>
    </location>
</feature>
<gene>
    <name evidence="1" type="primary">proA</name>
    <name type="ordered locus">Rru_A1238</name>
</gene>